<protein>
    <recommendedName>
        <fullName>Phosphatidylinositol 3-kinase pik3</fullName>
        <shortName>PI3-kinase vps34</shortName>
        <shortName>PI3K vps34</shortName>
        <shortName>PtdIns-3-kinase vps34</shortName>
        <ecNumber evidence="6 7">2.7.1.137</ecNumber>
    </recommendedName>
    <alternativeName>
        <fullName>Vacuolar protein sorting-associated protein 34</fullName>
    </alternativeName>
</protein>
<comment type="function">
    <text evidence="1 5 6 7">Phosphatidylinositol 3-kinase that functions as a part of the autophagy-specific VPS34 PI3-kinase complex I that plays a role in autophagosome assembly (PubMed:31941401, PubMed:7772832, PubMed:8719881). This complex is essential to recruit the atg8-phosphatidylinositol conjugate and the atg12-atg5 conjugate to the pre-autophagosomal structure (PubMed:31941401). Also functions as part of the VPS34 PI3-kinase complex II (By similarity).</text>
</comment>
<comment type="catalytic activity">
    <reaction evidence="6 7">
        <text>a 1,2-diacyl-sn-glycero-3-phospho-(1D-myo-inositol) + ATP = a 1,2-diacyl-sn-glycero-3-phospho-(1D-myo-inositol-3-phosphate) + ADP + H(+)</text>
        <dbReference type="Rhea" id="RHEA:12709"/>
        <dbReference type="ChEBI" id="CHEBI:15378"/>
        <dbReference type="ChEBI" id="CHEBI:30616"/>
        <dbReference type="ChEBI" id="CHEBI:57880"/>
        <dbReference type="ChEBI" id="CHEBI:58088"/>
        <dbReference type="ChEBI" id="CHEBI:456216"/>
        <dbReference type="EC" id="2.7.1.137"/>
    </reaction>
    <physiologicalReaction direction="left-to-right" evidence="6">
        <dbReference type="Rhea" id="RHEA:12710"/>
    </physiologicalReaction>
</comment>
<comment type="subunit">
    <text evidence="1 5">Component of the autophagy-specific vps34 PI3-kinase complex I composed of vps15, atg6, pik3/vps34, atg14 and atg38 (PubMed:31941401). Also a component of the VPS34 PI3-kinase complex II composed of atg6, pik3, vps15 and vps38 (By similarity).</text>
</comment>
<comment type="similarity">
    <text evidence="4">Belongs to the PI3/PI4-kinase family.</text>
</comment>
<evidence type="ECO:0000250" key="1">
    <source>
        <dbReference type="UniProtKB" id="P22543"/>
    </source>
</evidence>
<evidence type="ECO:0000255" key="2">
    <source>
        <dbReference type="PROSITE-ProRule" id="PRU00269"/>
    </source>
</evidence>
<evidence type="ECO:0000255" key="3">
    <source>
        <dbReference type="PROSITE-ProRule" id="PRU00878"/>
    </source>
</evidence>
<evidence type="ECO:0000255" key="4">
    <source>
        <dbReference type="PROSITE-ProRule" id="PRU00880"/>
    </source>
</evidence>
<evidence type="ECO:0000269" key="5">
    <source>
    </source>
</evidence>
<evidence type="ECO:0000269" key="6">
    <source>
    </source>
</evidence>
<evidence type="ECO:0000269" key="7">
    <source>
    </source>
</evidence>
<evidence type="ECO:0000305" key="8"/>
<name>VPS34_SCHPO</name>
<sequence length="801" mass="92135">MDRLVFSYCPSSKVTARFLVKFCFIEYQDSQEPCICTIQLFSGNESGSLMQKCFVSKIPNKSLLPTELSKISTHEWLDFGVTVSELSLNAKFVVSAWKPSFNDEEVYEFVGCTTYRLFDENNLLRQGLQKIPLQTSKEIKKYSPTSLELEQVKEINRLDGLLLKLQLGDVPSVNWLDDISFGKIKDFRSKHMSLVTIPILYLDFLQFSFPVVFQRSYYPKSENRVYYSSFDLELNLDSPAELKHRRLVRSQRNGPLDKDLKPNSKIRKELESILSYPPSEELSLEEKDLIWKFRFYLTRNKKAMTKFLKSVVWTDSSEVNQALSLLDSWTEIDIDDALELLSPSFVHPKVRAYAVSRLETASNEELLLYLLQLVQALRYDNPISSDERFQPSPLALFLVNRAISSPSIGNDLYWYLVVEIEDEPVSKLFSSVMFLFQKELSKSVEGRLIRETLSAQAKFVEKLLRISKSVQSFRGTRLKKIEYLKVLLEDHKYHLLDFHALPLPLDPSVNIVGIIPDACTVFKSTMQPLRLLFKCQDGSKYPIIFKNGDDLRQDQLVIQILTLMDKLLKKEKLDLHLKPYRILATGPTHGAVQFVPSKTLATILAEYHGSVLAYLRENNPDDGLNSANYGIDPVAMDNYVRSCAGYCVITYLLGVGDRHLDNLLITKDGHFFHADFGYILGRDPKLFSPAMKLSKEMVEGMGGYNSPFYQQFKSYCYTTFTALRKSSNLILNLFSLMVDANIPDIKFDKEKVVYKVKERFCLQMSESDAIKYFEQLINDSVSALFPQIIDRMHNLAQYMRS</sequence>
<dbReference type="EC" id="2.7.1.137" evidence="6 7"/>
<dbReference type="EMBL" id="U32583">
    <property type="protein sequence ID" value="AAC49133.1"/>
    <property type="molecule type" value="mRNA"/>
</dbReference>
<dbReference type="EMBL" id="CU329670">
    <property type="protein sequence ID" value="CAB93847.1"/>
    <property type="molecule type" value="Genomic_DNA"/>
</dbReference>
<dbReference type="PIR" id="PC4002">
    <property type="entry name" value="PC4002"/>
</dbReference>
<dbReference type="PIR" id="T52538">
    <property type="entry name" value="T52538"/>
</dbReference>
<dbReference type="RefSeq" id="NP_594699.1">
    <property type="nucleotide sequence ID" value="NM_001020127.2"/>
</dbReference>
<dbReference type="SMR" id="P50520"/>
<dbReference type="BioGRID" id="279864">
    <property type="interactions" value="10"/>
</dbReference>
<dbReference type="ComplexPortal" id="CPX-25763">
    <property type="entry name" value="Phosphatidylinositol 3-kinase complex, class III, type I"/>
</dbReference>
<dbReference type="ComplexPortal" id="CPX-25772">
    <property type="entry name" value="Phosphatidylinositol 3-kinase complex, class III, type II"/>
</dbReference>
<dbReference type="FunCoup" id="P50520">
    <property type="interactions" value="618"/>
</dbReference>
<dbReference type="STRING" id="284812.P50520"/>
<dbReference type="PaxDb" id="4896-SPAC458.05.1"/>
<dbReference type="EnsemblFungi" id="SPAC458.05.1">
    <property type="protein sequence ID" value="SPAC458.05.1:pep"/>
    <property type="gene ID" value="SPAC458.05"/>
</dbReference>
<dbReference type="GeneID" id="2543444"/>
<dbReference type="KEGG" id="spo:2543444"/>
<dbReference type="PomBase" id="SPAC458.05"/>
<dbReference type="VEuPathDB" id="FungiDB:SPAC458.05"/>
<dbReference type="eggNOG" id="KOG0906">
    <property type="taxonomic scope" value="Eukaryota"/>
</dbReference>
<dbReference type="HOGENOM" id="CLU_004869_0_0_1"/>
<dbReference type="InParanoid" id="P50520"/>
<dbReference type="OMA" id="LHKFAQY"/>
<dbReference type="PhylomeDB" id="P50520"/>
<dbReference type="BRENDA" id="2.7.1.137">
    <property type="organism ID" value="5613"/>
</dbReference>
<dbReference type="Reactome" id="R-SPO-1632852">
    <property type="pathway name" value="Macroautophagy"/>
</dbReference>
<dbReference type="Reactome" id="R-SPO-1660514">
    <property type="pathway name" value="Synthesis of PIPs at the Golgi membrane"/>
</dbReference>
<dbReference type="Reactome" id="R-SPO-1660516">
    <property type="pathway name" value="Synthesis of PIPs at the early endosome membrane"/>
</dbReference>
<dbReference type="Reactome" id="R-SPO-1660517">
    <property type="pathway name" value="Synthesis of PIPs at the late endosome membrane"/>
</dbReference>
<dbReference type="Reactome" id="R-SPO-5668599">
    <property type="pathway name" value="RHO GTPases Activate NADPH Oxidases"/>
</dbReference>
<dbReference type="PRO" id="PR:P50520"/>
<dbReference type="Proteomes" id="UP000002485">
    <property type="component" value="Chromosome I"/>
</dbReference>
<dbReference type="GO" id="GO:0005737">
    <property type="term" value="C:cytoplasm"/>
    <property type="evidence" value="ECO:0007005"/>
    <property type="project" value="PomBase"/>
</dbReference>
<dbReference type="GO" id="GO:0005829">
    <property type="term" value="C:cytosol"/>
    <property type="evidence" value="ECO:0007005"/>
    <property type="project" value="PomBase"/>
</dbReference>
<dbReference type="GO" id="GO:0005768">
    <property type="term" value="C:endosome"/>
    <property type="evidence" value="ECO:0000318"/>
    <property type="project" value="GO_Central"/>
</dbReference>
<dbReference type="GO" id="GO:0016020">
    <property type="term" value="C:membrane"/>
    <property type="evidence" value="ECO:0000315"/>
    <property type="project" value="PomBase"/>
</dbReference>
<dbReference type="GO" id="GO:0005777">
    <property type="term" value="C:peroxisome"/>
    <property type="evidence" value="ECO:0000318"/>
    <property type="project" value="GO_Central"/>
</dbReference>
<dbReference type="GO" id="GO:0000407">
    <property type="term" value="C:phagophore assembly site"/>
    <property type="evidence" value="ECO:0000318"/>
    <property type="project" value="GO_Central"/>
</dbReference>
<dbReference type="GO" id="GO:0034271">
    <property type="term" value="C:phosphatidylinositol 3-kinase complex, class III, type I"/>
    <property type="evidence" value="ECO:0000314"/>
    <property type="project" value="PomBase"/>
</dbReference>
<dbReference type="GO" id="GO:0034272">
    <property type="term" value="C:phosphatidylinositol 3-kinase complex, class III, type II"/>
    <property type="evidence" value="ECO:0000314"/>
    <property type="project" value="PomBase"/>
</dbReference>
<dbReference type="GO" id="GO:0016303">
    <property type="term" value="F:1-phosphatidylinositol-3-kinase activity"/>
    <property type="evidence" value="ECO:0000314"/>
    <property type="project" value="PomBase"/>
</dbReference>
<dbReference type="GO" id="GO:0005524">
    <property type="term" value="F:ATP binding"/>
    <property type="evidence" value="ECO:0007669"/>
    <property type="project" value="UniProtKB-KW"/>
</dbReference>
<dbReference type="GO" id="GO:0031321">
    <property type="term" value="P:ascospore-type prospore assembly"/>
    <property type="evidence" value="ECO:0000315"/>
    <property type="project" value="PomBase"/>
</dbReference>
<dbReference type="GO" id="GO:0032120">
    <property type="term" value="P:ascospore-type prospore membrane formation"/>
    <property type="evidence" value="ECO:0000315"/>
    <property type="project" value="PomBase"/>
</dbReference>
<dbReference type="GO" id="GO:0000045">
    <property type="term" value="P:autophagosome assembly"/>
    <property type="evidence" value="ECO:0000318"/>
    <property type="project" value="GO_Central"/>
</dbReference>
<dbReference type="GO" id="GO:0006897">
    <property type="term" value="P:endocytosis"/>
    <property type="evidence" value="ECO:0000318"/>
    <property type="project" value="GO_Central"/>
</dbReference>
<dbReference type="GO" id="GO:0016236">
    <property type="term" value="P:macroautophagy"/>
    <property type="evidence" value="ECO:0000315"/>
    <property type="project" value="PomBase"/>
</dbReference>
<dbReference type="GO" id="GO:0000425">
    <property type="term" value="P:pexophagy"/>
    <property type="evidence" value="ECO:0000318"/>
    <property type="project" value="GO_Central"/>
</dbReference>
<dbReference type="GO" id="GO:0036092">
    <property type="term" value="P:phosphatidylinositol-3-phosphate biosynthetic process"/>
    <property type="evidence" value="ECO:0000314"/>
    <property type="project" value="PomBase"/>
</dbReference>
<dbReference type="GO" id="GO:0048015">
    <property type="term" value="P:phosphatidylinositol-mediated signaling"/>
    <property type="evidence" value="ECO:0000318"/>
    <property type="project" value="GO_Central"/>
</dbReference>
<dbReference type="CDD" id="cd00870">
    <property type="entry name" value="PI3Ka_III"/>
    <property type="match status" value="1"/>
</dbReference>
<dbReference type="CDD" id="cd00896">
    <property type="entry name" value="PI3Kc_III"/>
    <property type="match status" value="1"/>
</dbReference>
<dbReference type="FunFam" id="1.10.1070.11:FF:000002">
    <property type="entry name" value="Phosphatidylinositol 3-kinase catalytic subunit type 3"/>
    <property type="match status" value="1"/>
</dbReference>
<dbReference type="FunFam" id="3.30.1010.10:FF:000002">
    <property type="entry name" value="Phosphatidylinositol 3-kinase catalytic subunit type 3"/>
    <property type="match status" value="1"/>
</dbReference>
<dbReference type="FunFam" id="1.25.40.70:FF:000009">
    <property type="entry name" value="Phosphatidylinositol 3-kinase VPS34"/>
    <property type="match status" value="1"/>
</dbReference>
<dbReference type="Gene3D" id="2.60.40.150">
    <property type="entry name" value="C2 domain"/>
    <property type="match status" value="1"/>
</dbReference>
<dbReference type="Gene3D" id="1.10.1070.11">
    <property type="entry name" value="Phosphatidylinositol 3-/4-kinase, catalytic domain"/>
    <property type="match status" value="1"/>
</dbReference>
<dbReference type="Gene3D" id="3.30.1010.10">
    <property type="entry name" value="Phosphatidylinositol 3-kinase Catalytic Subunit, Chain A, domain 4"/>
    <property type="match status" value="1"/>
</dbReference>
<dbReference type="Gene3D" id="1.25.40.70">
    <property type="entry name" value="Phosphatidylinositol 3-kinase, accessory domain (PIK)"/>
    <property type="match status" value="1"/>
</dbReference>
<dbReference type="InterPro" id="IPR016024">
    <property type="entry name" value="ARM-type_fold"/>
</dbReference>
<dbReference type="InterPro" id="IPR035892">
    <property type="entry name" value="C2_domain_sf"/>
</dbReference>
<dbReference type="InterPro" id="IPR011009">
    <property type="entry name" value="Kinase-like_dom_sf"/>
</dbReference>
<dbReference type="InterPro" id="IPR000403">
    <property type="entry name" value="PI3/4_kinase_cat_dom"/>
</dbReference>
<dbReference type="InterPro" id="IPR036940">
    <property type="entry name" value="PI3/4_kinase_cat_sf"/>
</dbReference>
<dbReference type="InterPro" id="IPR018936">
    <property type="entry name" value="PI3/4_kinase_CS"/>
</dbReference>
<dbReference type="InterPro" id="IPR002420">
    <property type="entry name" value="PI3K-type_C2_dom"/>
</dbReference>
<dbReference type="InterPro" id="IPR001263">
    <property type="entry name" value="PI3K_accessory_dom"/>
</dbReference>
<dbReference type="InterPro" id="IPR042236">
    <property type="entry name" value="PI3K_accessory_sf"/>
</dbReference>
<dbReference type="InterPro" id="IPR008290">
    <property type="entry name" value="PI3K_Vps34"/>
</dbReference>
<dbReference type="InterPro" id="IPR015433">
    <property type="entry name" value="PI_Kinase"/>
</dbReference>
<dbReference type="PANTHER" id="PTHR10048:SF7">
    <property type="entry name" value="PHOSPHATIDYLINOSITOL 3-KINASE CATALYTIC SUBUNIT TYPE 3"/>
    <property type="match status" value="1"/>
</dbReference>
<dbReference type="PANTHER" id="PTHR10048">
    <property type="entry name" value="PHOSPHATIDYLINOSITOL KINASE"/>
    <property type="match status" value="1"/>
</dbReference>
<dbReference type="Pfam" id="PF00454">
    <property type="entry name" value="PI3_PI4_kinase"/>
    <property type="match status" value="1"/>
</dbReference>
<dbReference type="Pfam" id="PF00792">
    <property type="entry name" value="PI3K_C2"/>
    <property type="match status" value="1"/>
</dbReference>
<dbReference type="Pfam" id="PF00613">
    <property type="entry name" value="PI3Ka"/>
    <property type="match status" value="1"/>
</dbReference>
<dbReference type="PIRSF" id="PIRSF000587">
    <property type="entry name" value="PI3K_Vps34"/>
    <property type="match status" value="1"/>
</dbReference>
<dbReference type="SMART" id="SM00142">
    <property type="entry name" value="PI3K_C2"/>
    <property type="match status" value="1"/>
</dbReference>
<dbReference type="SMART" id="SM00145">
    <property type="entry name" value="PI3Ka"/>
    <property type="match status" value="1"/>
</dbReference>
<dbReference type="SMART" id="SM00146">
    <property type="entry name" value="PI3Kc"/>
    <property type="match status" value="1"/>
</dbReference>
<dbReference type="SUPFAM" id="SSF48371">
    <property type="entry name" value="ARM repeat"/>
    <property type="match status" value="1"/>
</dbReference>
<dbReference type="SUPFAM" id="SSF49562">
    <property type="entry name" value="C2 domain (Calcium/lipid-binding domain, CaLB)"/>
    <property type="match status" value="1"/>
</dbReference>
<dbReference type="SUPFAM" id="SSF56112">
    <property type="entry name" value="Protein kinase-like (PK-like)"/>
    <property type="match status" value="1"/>
</dbReference>
<dbReference type="PROSITE" id="PS51547">
    <property type="entry name" value="C2_PI3K"/>
    <property type="match status" value="1"/>
</dbReference>
<dbReference type="PROSITE" id="PS00915">
    <property type="entry name" value="PI3_4_KINASE_1"/>
    <property type="match status" value="1"/>
</dbReference>
<dbReference type="PROSITE" id="PS00916">
    <property type="entry name" value="PI3_4_KINASE_2"/>
    <property type="match status" value="1"/>
</dbReference>
<dbReference type="PROSITE" id="PS50290">
    <property type="entry name" value="PI3_4_KINASE_3"/>
    <property type="match status" value="1"/>
</dbReference>
<dbReference type="PROSITE" id="PS51545">
    <property type="entry name" value="PIK_HELICAL"/>
    <property type="match status" value="1"/>
</dbReference>
<gene>
    <name type="primary">pik3</name>
    <name type="synonym">vps34</name>
    <name type="ORF">SPAC458.05</name>
</gene>
<keyword id="KW-0067">ATP-binding</keyword>
<keyword id="KW-0072">Autophagy</keyword>
<keyword id="KW-0418">Kinase</keyword>
<keyword id="KW-0547">Nucleotide-binding</keyword>
<keyword id="KW-1185">Reference proteome</keyword>
<keyword id="KW-0808">Transferase</keyword>
<organism>
    <name type="scientific">Schizosaccharomyces pombe (strain 972 / ATCC 24843)</name>
    <name type="common">Fission yeast</name>
    <dbReference type="NCBI Taxonomy" id="284812"/>
    <lineage>
        <taxon>Eukaryota</taxon>
        <taxon>Fungi</taxon>
        <taxon>Dikarya</taxon>
        <taxon>Ascomycota</taxon>
        <taxon>Taphrinomycotina</taxon>
        <taxon>Schizosaccharomycetes</taxon>
        <taxon>Schizosaccharomycetales</taxon>
        <taxon>Schizosaccharomycetaceae</taxon>
        <taxon>Schizosaccharomyces</taxon>
    </lineage>
</organism>
<accession>P50520</accession>
<accession>Q9P3W3</accession>
<accession>Q9URD2</accession>
<feature type="chain" id="PRO_0000088817" description="Phosphatidylinositol 3-kinase pik3">
    <location>
        <begin position="1"/>
        <end position="801"/>
    </location>
</feature>
<feature type="domain" description="C2 PI3K-type" evidence="4">
    <location>
        <begin position="14"/>
        <end position="166"/>
    </location>
</feature>
<feature type="domain" description="PIK helical" evidence="3">
    <location>
        <begin position="257"/>
        <end position="439"/>
    </location>
</feature>
<feature type="domain" description="PI3K/PI4K catalytic" evidence="2">
    <location>
        <begin position="515"/>
        <end position="785"/>
    </location>
</feature>
<feature type="region of interest" description="G-loop" evidence="2">
    <location>
        <begin position="521"/>
        <end position="527"/>
    </location>
</feature>
<feature type="region of interest" description="Catalytic loop" evidence="2">
    <location>
        <begin position="654"/>
        <end position="662"/>
    </location>
</feature>
<feature type="region of interest" description="Activation loop" evidence="2">
    <location>
        <begin position="673"/>
        <end position="694"/>
    </location>
</feature>
<feature type="sequence conflict" description="In Ref. 1; AAC49133." evidence="8" ref="1">
    <original>K</original>
    <variation>Q</variation>
    <location>
        <position position="164"/>
    </location>
</feature>
<feature type="sequence conflict" description="In Ref. 3." evidence="8" ref="3">
    <original>L</original>
    <variation>I</variation>
    <location>
        <position position="236"/>
    </location>
</feature>
<feature type="sequence conflict" description="In Ref. 3." evidence="8" ref="3">
    <original>S</original>
    <variation>T</variation>
    <location>
        <position position="642"/>
    </location>
</feature>
<proteinExistence type="evidence at protein level"/>
<reference key="1">
    <citation type="journal article" date="1995" name="J. Cell Sci.">
        <title>Schizosaccharomyces pombe Vps34p, a phosphatidylinositol-specific PI 3-kinase essential for normal cell growth and vacuole morphology.</title>
        <authorList>
            <person name="Takegawa K."/>
            <person name="Dewald D.B."/>
            <person name="Emr S.E."/>
        </authorList>
    </citation>
    <scope>NUCLEOTIDE SEQUENCE [MRNA]</scope>
    <scope>FUNCTION</scope>
    <scope>CATALYTIC ACTIVITY</scope>
</reference>
<reference key="2">
    <citation type="journal article" date="2002" name="Nature">
        <title>The genome sequence of Schizosaccharomyces pombe.</title>
        <authorList>
            <person name="Wood V."/>
            <person name="Gwilliam R."/>
            <person name="Rajandream M.A."/>
            <person name="Lyne M.H."/>
            <person name="Lyne R."/>
            <person name="Stewart A."/>
            <person name="Sgouros J.G."/>
            <person name="Peat N."/>
            <person name="Hayles J."/>
            <person name="Baker S.G."/>
            <person name="Basham D."/>
            <person name="Bowman S."/>
            <person name="Brooks K."/>
            <person name="Brown D."/>
            <person name="Brown S."/>
            <person name="Chillingworth T."/>
            <person name="Churcher C.M."/>
            <person name="Collins M."/>
            <person name="Connor R."/>
            <person name="Cronin A."/>
            <person name="Davis P."/>
            <person name="Feltwell T."/>
            <person name="Fraser A."/>
            <person name="Gentles S."/>
            <person name="Goble A."/>
            <person name="Hamlin N."/>
            <person name="Harris D.E."/>
            <person name="Hidalgo J."/>
            <person name="Hodgson G."/>
            <person name="Holroyd S."/>
            <person name="Hornsby T."/>
            <person name="Howarth S."/>
            <person name="Huckle E.J."/>
            <person name="Hunt S."/>
            <person name="Jagels K."/>
            <person name="James K.D."/>
            <person name="Jones L."/>
            <person name="Jones M."/>
            <person name="Leather S."/>
            <person name="McDonald S."/>
            <person name="McLean J."/>
            <person name="Mooney P."/>
            <person name="Moule S."/>
            <person name="Mungall K.L."/>
            <person name="Murphy L.D."/>
            <person name="Niblett D."/>
            <person name="Odell C."/>
            <person name="Oliver K."/>
            <person name="O'Neil S."/>
            <person name="Pearson D."/>
            <person name="Quail M.A."/>
            <person name="Rabbinowitsch E."/>
            <person name="Rutherford K.M."/>
            <person name="Rutter S."/>
            <person name="Saunders D."/>
            <person name="Seeger K."/>
            <person name="Sharp S."/>
            <person name="Skelton J."/>
            <person name="Simmonds M.N."/>
            <person name="Squares R."/>
            <person name="Squares S."/>
            <person name="Stevens K."/>
            <person name="Taylor K."/>
            <person name="Taylor R.G."/>
            <person name="Tivey A."/>
            <person name="Walsh S.V."/>
            <person name="Warren T."/>
            <person name="Whitehead S."/>
            <person name="Woodward J.R."/>
            <person name="Volckaert G."/>
            <person name="Aert R."/>
            <person name="Robben J."/>
            <person name="Grymonprez B."/>
            <person name="Weltjens I."/>
            <person name="Vanstreels E."/>
            <person name="Rieger M."/>
            <person name="Schaefer M."/>
            <person name="Mueller-Auer S."/>
            <person name="Gabel C."/>
            <person name="Fuchs M."/>
            <person name="Duesterhoeft A."/>
            <person name="Fritzc C."/>
            <person name="Holzer E."/>
            <person name="Moestl D."/>
            <person name="Hilbert H."/>
            <person name="Borzym K."/>
            <person name="Langer I."/>
            <person name="Beck A."/>
            <person name="Lehrach H."/>
            <person name="Reinhardt R."/>
            <person name="Pohl T.M."/>
            <person name="Eger P."/>
            <person name="Zimmermann W."/>
            <person name="Wedler H."/>
            <person name="Wambutt R."/>
            <person name="Purnelle B."/>
            <person name="Goffeau A."/>
            <person name="Cadieu E."/>
            <person name="Dreano S."/>
            <person name="Gloux S."/>
            <person name="Lelaure V."/>
            <person name="Mottier S."/>
            <person name="Galibert F."/>
            <person name="Aves S.J."/>
            <person name="Xiang Z."/>
            <person name="Hunt C."/>
            <person name="Moore K."/>
            <person name="Hurst S.M."/>
            <person name="Lucas M."/>
            <person name="Rochet M."/>
            <person name="Gaillardin C."/>
            <person name="Tallada V.A."/>
            <person name="Garzon A."/>
            <person name="Thode G."/>
            <person name="Daga R.R."/>
            <person name="Cruzado L."/>
            <person name="Jimenez J."/>
            <person name="Sanchez M."/>
            <person name="del Rey F."/>
            <person name="Benito J."/>
            <person name="Dominguez A."/>
            <person name="Revuelta J.L."/>
            <person name="Moreno S."/>
            <person name="Armstrong J."/>
            <person name="Forsburg S.L."/>
            <person name="Cerutti L."/>
            <person name="Lowe T."/>
            <person name="McCombie W.R."/>
            <person name="Paulsen I."/>
            <person name="Potashkin J."/>
            <person name="Shpakovski G.V."/>
            <person name="Ussery D."/>
            <person name="Barrell B.G."/>
            <person name="Nurse P."/>
        </authorList>
    </citation>
    <scope>NUCLEOTIDE SEQUENCE [LARGE SCALE GENOMIC DNA]</scope>
    <source>
        <strain>972 / ATCC 24843</strain>
    </source>
</reference>
<reference key="3">
    <citation type="journal article" date="1995" name="Biosci. Biotechnol. Biochem.">
        <title>Phosphatidylinositol-3 kinase in fission yeast: a possible role in stress responses.</title>
        <authorList>
            <person name="Kimura K."/>
            <person name="Miyake S."/>
            <person name="Makuuchi M."/>
            <person name="Morita R."/>
            <person name="Usui T."/>
            <person name="Yoshida M."/>
            <person name="Horinouchi S."/>
            <person name="Fukui Y."/>
        </authorList>
    </citation>
    <scope>NUCLEOTIDE SEQUENCE OF 138-801</scope>
    <scope>FUNCTION</scope>
    <scope>CATALYTIC ACTIVITY</scope>
</reference>
<reference key="4">
    <citation type="journal article" date="2020" name="Autophagy">
        <title>Atg38-Atg8 interaction in fission yeast establishes a positive feedback loop to promote autophagy.</title>
        <authorList>
            <person name="Yu Z.Q."/>
            <person name="Sun L.L."/>
            <person name="Jiang Z.D."/>
            <person name="Liu X.M."/>
            <person name="Zhao D."/>
            <person name="Wang H.T."/>
            <person name="He W.Z."/>
            <person name="Dong M.Q."/>
            <person name="Du L.L."/>
        </authorList>
    </citation>
    <scope>FUNCTION</scope>
    <scope>IDENTIFICATION IN THE AUTOPHAGY-SPECIFIC VPS34 PI3-KINASE COMPLEX I</scope>
</reference>